<evidence type="ECO:0000255" key="1">
    <source>
        <dbReference type="HAMAP-Rule" id="MF_00001"/>
    </source>
</evidence>
<protein>
    <recommendedName>
        <fullName evidence="1">Aspartate carbamoyltransferase catalytic subunit</fullName>
        <ecNumber evidence="1">2.1.3.2</ecNumber>
    </recommendedName>
    <alternativeName>
        <fullName evidence="1">Aspartate transcarbamylase</fullName>
        <shortName evidence="1">ATCase</shortName>
    </alternativeName>
</protein>
<keyword id="KW-0665">Pyrimidine biosynthesis</keyword>
<keyword id="KW-0808">Transferase</keyword>
<dbReference type="EC" id="2.1.3.2" evidence="1"/>
<dbReference type="EMBL" id="AM999887">
    <property type="protein sequence ID" value="CAQ54784.1"/>
    <property type="molecule type" value="Genomic_DNA"/>
</dbReference>
<dbReference type="RefSeq" id="WP_007302094.1">
    <property type="nucleotide sequence ID" value="NC_010981.1"/>
</dbReference>
<dbReference type="SMR" id="B3CLL6"/>
<dbReference type="KEGG" id="wpi:WP0676"/>
<dbReference type="eggNOG" id="COG0540">
    <property type="taxonomic scope" value="Bacteria"/>
</dbReference>
<dbReference type="HOGENOM" id="CLU_043846_2_0_5"/>
<dbReference type="UniPathway" id="UPA00070">
    <property type="reaction ID" value="UER00116"/>
</dbReference>
<dbReference type="Proteomes" id="UP000008814">
    <property type="component" value="Chromosome"/>
</dbReference>
<dbReference type="GO" id="GO:0005829">
    <property type="term" value="C:cytosol"/>
    <property type="evidence" value="ECO:0007669"/>
    <property type="project" value="TreeGrafter"/>
</dbReference>
<dbReference type="GO" id="GO:0016597">
    <property type="term" value="F:amino acid binding"/>
    <property type="evidence" value="ECO:0007669"/>
    <property type="project" value="InterPro"/>
</dbReference>
<dbReference type="GO" id="GO:0004070">
    <property type="term" value="F:aspartate carbamoyltransferase activity"/>
    <property type="evidence" value="ECO:0007669"/>
    <property type="project" value="UniProtKB-UniRule"/>
</dbReference>
<dbReference type="GO" id="GO:0006207">
    <property type="term" value="P:'de novo' pyrimidine nucleobase biosynthetic process"/>
    <property type="evidence" value="ECO:0007669"/>
    <property type="project" value="InterPro"/>
</dbReference>
<dbReference type="GO" id="GO:0044205">
    <property type="term" value="P:'de novo' UMP biosynthetic process"/>
    <property type="evidence" value="ECO:0007669"/>
    <property type="project" value="UniProtKB-UniRule"/>
</dbReference>
<dbReference type="GO" id="GO:0006520">
    <property type="term" value="P:amino acid metabolic process"/>
    <property type="evidence" value="ECO:0007669"/>
    <property type="project" value="InterPro"/>
</dbReference>
<dbReference type="Gene3D" id="3.40.50.1370">
    <property type="entry name" value="Aspartate/ornithine carbamoyltransferase"/>
    <property type="match status" value="2"/>
</dbReference>
<dbReference type="HAMAP" id="MF_00001">
    <property type="entry name" value="Asp_carb_tr"/>
    <property type="match status" value="1"/>
</dbReference>
<dbReference type="InterPro" id="IPR006132">
    <property type="entry name" value="Asp/Orn_carbamoyltranf_P-bd"/>
</dbReference>
<dbReference type="InterPro" id="IPR006130">
    <property type="entry name" value="Asp/Orn_carbamoylTrfase"/>
</dbReference>
<dbReference type="InterPro" id="IPR036901">
    <property type="entry name" value="Asp/Orn_carbamoylTrfase_sf"/>
</dbReference>
<dbReference type="InterPro" id="IPR002082">
    <property type="entry name" value="Asp_carbamoyltransf"/>
</dbReference>
<dbReference type="InterPro" id="IPR006131">
    <property type="entry name" value="Asp_carbamoyltransf_Asp/Orn-bd"/>
</dbReference>
<dbReference type="NCBIfam" id="TIGR00670">
    <property type="entry name" value="asp_carb_tr"/>
    <property type="match status" value="1"/>
</dbReference>
<dbReference type="NCBIfam" id="NF002032">
    <property type="entry name" value="PRK00856.1"/>
    <property type="match status" value="1"/>
</dbReference>
<dbReference type="PANTHER" id="PTHR45753:SF6">
    <property type="entry name" value="ASPARTATE CARBAMOYLTRANSFERASE"/>
    <property type="match status" value="1"/>
</dbReference>
<dbReference type="PANTHER" id="PTHR45753">
    <property type="entry name" value="ORNITHINE CARBAMOYLTRANSFERASE, MITOCHONDRIAL"/>
    <property type="match status" value="1"/>
</dbReference>
<dbReference type="Pfam" id="PF00185">
    <property type="entry name" value="OTCace"/>
    <property type="match status" value="1"/>
</dbReference>
<dbReference type="Pfam" id="PF02729">
    <property type="entry name" value="OTCace_N"/>
    <property type="match status" value="1"/>
</dbReference>
<dbReference type="PRINTS" id="PR00100">
    <property type="entry name" value="AOTCASE"/>
</dbReference>
<dbReference type="PRINTS" id="PR00101">
    <property type="entry name" value="ATCASE"/>
</dbReference>
<dbReference type="SUPFAM" id="SSF53671">
    <property type="entry name" value="Aspartate/ornithine carbamoyltransferase"/>
    <property type="match status" value="1"/>
</dbReference>
<dbReference type="PROSITE" id="PS00097">
    <property type="entry name" value="CARBAMOYLTRANSFERASE"/>
    <property type="match status" value="1"/>
</dbReference>
<comment type="function">
    <text evidence="1">Catalyzes the condensation of carbamoyl phosphate and aspartate to form carbamoyl aspartate and inorganic phosphate, the committed step in the de novo pyrimidine nucleotide biosynthesis pathway.</text>
</comment>
<comment type="catalytic activity">
    <reaction evidence="1">
        <text>carbamoyl phosphate + L-aspartate = N-carbamoyl-L-aspartate + phosphate + H(+)</text>
        <dbReference type="Rhea" id="RHEA:20013"/>
        <dbReference type="ChEBI" id="CHEBI:15378"/>
        <dbReference type="ChEBI" id="CHEBI:29991"/>
        <dbReference type="ChEBI" id="CHEBI:32814"/>
        <dbReference type="ChEBI" id="CHEBI:43474"/>
        <dbReference type="ChEBI" id="CHEBI:58228"/>
        <dbReference type="EC" id="2.1.3.2"/>
    </reaction>
</comment>
<comment type="pathway">
    <text evidence="1">Pyrimidine metabolism; UMP biosynthesis via de novo pathway; (S)-dihydroorotate from bicarbonate: step 2/3.</text>
</comment>
<comment type="subunit">
    <text evidence="1">Heterododecamer (2C3:3R2) of six catalytic PyrB chains organized as two trimers (C3), and six regulatory PyrI chains organized as three dimers (R2).</text>
</comment>
<comment type="similarity">
    <text evidence="1">Belongs to the aspartate/ornithine carbamoyltransferase superfamily. ATCase family.</text>
</comment>
<reference key="1">
    <citation type="journal article" date="2008" name="Mol. Biol. Evol.">
        <title>Genome evolution of Wolbachia strain wPip from the Culex pipiens group.</title>
        <authorList>
            <person name="Klasson L."/>
            <person name="Walker T."/>
            <person name="Sebaihia M."/>
            <person name="Sanders M.J."/>
            <person name="Quail M.A."/>
            <person name="Lord A."/>
            <person name="Sanders S."/>
            <person name="Earl J."/>
            <person name="O'Neill S.L."/>
            <person name="Thomson N."/>
            <person name="Sinkins S.P."/>
            <person name="Parkhill J."/>
        </authorList>
    </citation>
    <scope>NUCLEOTIDE SEQUENCE [LARGE SCALE GENOMIC DNA]</scope>
    <source>
        <strain>wPip</strain>
    </source>
</reference>
<proteinExistence type="inferred from homology"/>
<sequence length="295" mass="32917">MDKRRNLLNISDLTIGDVENITKLANQYLEEKVENSHVLKNKIVINLFFEDSTRTLASFEIAAKSLGANVITLPIKSSSINKGEDLKDMIKTLNAMNPDYMIIRHKSSGIINTLAKHVNCSLINAGDGSSEHPTQALADYLVIISHKKQIKNLKIVICGDILHSRVARSNIRLLKMFGAKISLVAPPALMCKHFSEVDSLHYSLTEGIKDADVIMLLRLQKERMNNNSSEKEYFHLYGLDAQKLSHAKPDAIVMHPGPINRGIEISNDIADCVILQQVKFGLATRKAVLHYLINV</sequence>
<name>PYRB_WOLPP</name>
<organism>
    <name type="scientific">Wolbachia pipientis subsp. Culex pipiens (strain wPip)</name>
    <dbReference type="NCBI Taxonomy" id="570417"/>
    <lineage>
        <taxon>Bacteria</taxon>
        <taxon>Pseudomonadati</taxon>
        <taxon>Pseudomonadota</taxon>
        <taxon>Alphaproteobacteria</taxon>
        <taxon>Rickettsiales</taxon>
        <taxon>Anaplasmataceae</taxon>
        <taxon>Wolbachieae</taxon>
        <taxon>Wolbachia</taxon>
    </lineage>
</organism>
<gene>
    <name evidence="1" type="primary">pyrB</name>
    <name type="ordered locus">WP0676</name>
</gene>
<feature type="chain" id="PRO_1000088815" description="Aspartate carbamoyltransferase catalytic subunit">
    <location>
        <begin position="1"/>
        <end position="295"/>
    </location>
</feature>
<feature type="binding site" evidence="1">
    <location>
        <position position="54"/>
    </location>
    <ligand>
        <name>carbamoyl phosphate</name>
        <dbReference type="ChEBI" id="CHEBI:58228"/>
    </ligand>
</feature>
<feature type="binding site" evidence="1">
    <location>
        <position position="55"/>
    </location>
    <ligand>
        <name>carbamoyl phosphate</name>
        <dbReference type="ChEBI" id="CHEBI:58228"/>
    </ligand>
</feature>
<feature type="binding site" evidence="1">
    <location>
        <position position="82"/>
    </location>
    <ligand>
        <name>L-aspartate</name>
        <dbReference type="ChEBI" id="CHEBI:29991"/>
    </ligand>
</feature>
<feature type="binding site" evidence="1">
    <location>
        <position position="104"/>
    </location>
    <ligand>
        <name>carbamoyl phosphate</name>
        <dbReference type="ChEBI" id="CHEBI:58228"/>
    </ligand>
</feature>
<feature type="binding site" evidence="1">
    <location>
        <position position="132"/>
    </location>
    <ligand>
        <name>carbamoyl phosphate</name>
        <dbReference type="ChEBI" id="CHEBI:58228"/>
    </ligand>
</feature>
<feature type="binding site" evidence="1">
    <location>
        <position position="135"/>
    </location>
    <ligand>
        <name>carbamoyl phosphate</name>
        <dbReference type="ChEBI" id="CHEBI:58228"/>
    </ligand>
</feature>
<feature type="binding site" evidence="1">
    <location>
        <position position="165"/>
    </location>
    <ligand>
        <name>L-aspartate</name>
        <dbReference type="ChEBI" id="CHEBI:29991"/>
    </ligand>
</feature>
<feature type="binding site" evidence="1">
    <location>
        <position position="218"/>
    </location>
    <ligand>
        <name>L-aspartate</name>
        <dbReference type="ChEBI" id="CHEBI:29991"/>
    </ligand>
</feature>
<feature type="binding site" evidence="1">
    <location>
        <position position="257"/>
    </location>
    <ligand>
        <name>carbamoyl phosphate</name>
        <dbReference type="ChEBI" id="CHEBI:58228"/>
    </ligand>
</feature>
<feature type="binding site" evidence="1">
    <location>
        <position position="258"/>
    </location>
    <ligand>
        <name>carbamoyl phosphate</name>
        <dbReference type="ChEBI" id="CHEBI:58228"/>
    </ligand>
</feature>
<accession>B3CLL6</accession>